<proteinExistence type="evidence at transcript level"/>
<feature type="chain" id="PRO_0000272617" description="Tigger transposable element-derived protein 4">
    <location>
        <begin position="1"/>
        <end position="513"/>
    </location>
</feature>
<feature type="domain" description="HTH psq-type" evidence="3">
    <location>
        <begin position="12"/>
        <end position="63"/>
    </location>
</feature>
<feature type="domain" description="HTH CENPB-type" evidence="4">
    <location>
        <begin position="75"/>
        <end position="146"/>
    </location>
</feature>
<feature type="domain" description="DDE-1" evidence="2">
    <location>
        <begin position="174"/>
        <end position="375"/>
    </location>
</feature>
<feature type="DNA-binding region" description="H-T-H motif" evidence="1">
    <location>
        <begin position="39"/>
        <end position="59"/>
    </location>
</feature>
<feature type="DNA-binding region" description="H-T-H motif" evidence="1">
    <location>
        <begin position="108"/>
        <end position="139"/>
    </location>
</feature>
<feature type="region of interest" description="Disordered" evidence="5">
    <location>
        <begin position="433"/>
        <end position="473"/>
    </location>
</feature>
<feature type="compositionally biased region" description="Basic and acidic residues" evidence="5">
    <location>
        <begin position="433"/>
        <end position="448"/>
    </location>
</feature>
<accession>Q8BUZ3</accession>
<name>TIGD4_MOUSE</name>
<sequence length="513" mass="57472">MAEASVDIGTQPVTVKKKKSLSIEEKIDIINAVESGKKKAEIAAEYGIKKNSLSSIMKNKDKVLEAFESLRFDPKRKRLRTAFYTDLEEALMRWYRIAQCLNVPVNGPMLRLKANDFAQKLGHNDFKCSNGWLDRFKSRYGLVFRAQPVEATGISIDPSTVWYQNVLPYYLNDYHPKNVFNVKETGLLYRMLPTNTFAFKGETCSVGKLCKDRITLALGTNMDGSEKLPLLIIGKNRAPRCFKGIKSLPVYYEANRTAWMTAAIFEQWMQKLDEKFQAQKRRVVIFVDSCPAHPEVKNLKSIELAFFPSCLSSGFAAMNQGVIKSLKIKYRHCLIKKFLSSVESSKEFTFSLLDAVDTLHLCWRAVTPETIVKSYEEAGFRSPKGENDTANADAAVALDLTAHAVGAGVEFLEGLSIEEYAALDEDLETCEATQKDDAEWAGESKQDETGLYTSDEEEEDSGALEVDLPSPSKKDALSAVGTLKRFLRSHDLNDELHGSLADLENFINALSPK</sequence>
<comment type="subcellular location">
    <subcellularLocation>
        <location evidence="6">Nucleus</location>
    </subcellularLocation>
</comment>
<comment type="similarity">
    <text evidence="6">Belongs to the tigger transposable element derived protein family.</text>
</comment>
<evidence type="ECO:0000250" key="1"/>
<evidence type="ECO:0000255" key="2"/>
<evidence type="ECO:0000255" key="3">
    <source>
        <dbReference type="PROSITE-ProRule" id="PRU00320"/>
    </source>
</evidence>
<evidence type="ECO:0000255" key="4">
    <source>
        <dbReference type="PROSITE-ProRule" id="PRU00583"/>
    </source>
</evidence>
<evidence type="ECO:0000256" key="5">
    <source>
        <dbReference type="SAM" id="MobiDB-lite"/>
    </source>
</evidence>
<evidence type="ECO:0000305" key="6"/>
<dbReference type="EMBL" id="AK081667">
    <property type="protein sequence ID" value="BAC38284.1"/>
    <property type="molecule type" value="mRNA"/>
</dbReference>
<dbReference type="CCDS" id="CCDS17439.1"/>
<dbReference type="RefSeq" id="NP_997161.1">
    <property type="nucleotide sequence ID" value="NM_207278.2"/>
</dbReference>
<dbReference type="SMR" id="Q8BUZ3"/>
<dbReference type="FunCoup" id="Q8BUZ3">
    <property type="interactions" value="427"/>
</dbReference>
<dbReference type="IntAct" id="Q8BUZ3">
    <property type="interactions" value="4"/>
</dbReference>
<dbReference type="STRING" id="10090.ENSMUSP00000052320"/>
<dbReference type="iPTMnet" id="Q8BUZ3"/>
<dbReference type="PhosphoSitePlus" id="Q8BUZ3"/>
<dbReference type="PaxDb" id="10090-ENSMUSP00000052320"/>
<dbReference type="ProteomicsDB" id="262783"/>
<dbReference type="Antibodypedia" id="27816">
    <property type="antibodies" value="82 antibodies from 20 providers"/>
</dbReference>
<dbReference type="Ensembl" id="ENSMUST00000062623.4">
    <property type="protein sequence ID" value="ENSMUSP00000052320.4"/>
    <property type="gene ID" value="ENSMUSG00000047819.4"/>
</dbReference>
<dbReference type="GeneID" id="403175"/>
<dbReference type="KEGG" id="mmu:403175"/>
<dbReference type="UCSC" id="uc008pqh.1">
    <property type="organism name" value="mouse"/>
</dbReference>
<dbReference type="AGR" id="MGI:2685264"/>
<dbReference type="CTD" id="201798"/>
<dbReference type="MGI" id="MGI:2685264">
    <property type="gene designation" value="Tigd4"/>
</dbReference>
<dbReference type="VEuPathDB" id="HostDB:ENSMUSG00000047819"/>
<dbReference type="eggNOG" id="KOG3105">
    <property type="taxonomic scope" value="Eukaryota"/>
</dbReference>
<dbReference type="GeneTree" id="ENSGT00940000160195"/>
<dbReference type="HOGENOM" id="CLU_018294_0_4_1"/>
<dbReference type="InParanoid" id="Q8BUZ3"/>
<dbReference type="OMA" id="QWMQKLD"/>
<dbReference type="OrthoDB" id="125347at2759"/>
<dbReference type="PhylomeDB" id="Q8BUZ3"/>
<dbReference type="TreeFam" id="TF101131"/>
<dbReference type="BioGRID-ORCS" id="403175">
    <property type="hits" value="1 hit in 77 CRISPR screens"/>
</dbReference>
<dbReference type="PRO" id="PR:Q8BUZ3"/>
<dbReference type="Proteomes" id="UP000000589">
    <property type="component" value="Chromosome 3"/>
</dbReference>
<dbReference type="RNAct" id="Q8BUZ3">
    <property type="molecule type" value="protein"/>
</dbReference>
<dbReference type="Bgee" id="ENSMUSG00000047819">
    <property type="expression patterns" value="Expressed in quadriceps femoris and 18 other cell types or tissues"/>
</dbReference>
<dbReference type="GO" id="GO:0005634">
    <property type="term" value="C:nucleus"/>
    <property type="evidence" value="ECO:0007669"/>
    <property type="project" value="UniProtKB-SubCell"/>
</dbReference>
<dbReference type="GO" id="GO:0003677">
    <property type="term" value="F:DNA binding"/>
    <property type="evidence" value="ECO:0007669"/>
    <property type="project" value="UniProtKB-KW"/>
</dbReference>
<dbReference type="Gene3D" id="1.10.10.60">
    <property type="entry name" value="Homeodomain-like"/>
    <property type="match status" value="2"/>
</dbReference>
<dbReference type="InterPro" id="IPR050863">
    <property type="entry name" value="CenT-Element_Derived"/>
</dbReference>
<dbReference type="InterPro" id="IPR004875">
    <property type="entry name" value="DDE_SF_endonuclease_dom"/>
</dbReference>
<dbReference type="InterPro" id="IPR009057">
    <property type="entry name" value="Homeodomain-like_sf"/>
</dbReference>
<dbReference type="InterPro" id="IPR006600">
    <property type="entry name" value="HTH_CenpB_DNA-bd_dom"/>
</dbReference>
<dbReference type="InterPro" id="IPR007889">
    <property type="entry name" value="HTH_Psq"/>
</dbReference>
<dbReference type="PANTHER" id="PTHR19303:SF18">
    <property type="entry name" value="TIGGER TRANSPOSABLE ELEMENT-DERIVED PROTEIN 4"/>
    <property type="match status" value="1"/>
</dbReference>
<dbReference type="PANTHER" id="PTHR19303">
    <property type="entry name" value="TRANSPOSON"/>
    <property type="match status" value="1"/>
</dbReference>
<dbReference type="Pfam" id="PF04218">
    <property type="entry name" value="CENP-B_N"/>
    <property type="match status" value="1"/>
</dbReference>
<dbReference type="Pfam" id="PF03184">
    <property type="entry name" value="DDE_1"/>
    <property type="match status" value="1"/>
</dbReference>
<dbReference type="Pfam" id="PF03221">
    <property type="entry name" value="HTH_Tnp_Tc5"/>
    <property type="match status" value="1"/>
</dbReference>
<dbReference type="SMART" id="SM00674">
    <property type="entry name" value="CENPB"/>
    <property type="match status" value="1"/>
</dbReference>
<dbReference type="SUPFAM" id="SSF46689">
    <property type="entry name" value="Homeodomain-like"/>
    <property type="match status" value="2"/>
</dbReference>
<dbReference type="PROSITE" id="PS51253">
    <property type="entry name" value="HTH_CENPB"/>
    <property type="match status" value="1"/>
</dbReference>
<dbReference type="PROSITE" id="PS50960">
    <property type="entry name" value="HTH_PSQ"/>
    <property type="match status" value="1"/>
</dbReference>
<keyword id="KW-0238">DNA-binding</keyword>
<keyword id="KW-0539">Nucleus</keyword>
<keyword id="KW-1185">Reference proteome</keyword>
<reference key="1">
    <citation type="journal article" date="2005" name="Science">
        <title>The transcriptional landscape of the mammalian genome.</title>
        <authorList>
            <person name="Carninci P."/>
            <person name="Kasukawa T."/>
            <person name="Katayama S."/>
            <person name="Gough J."/>
            <person name="Frith M.C."/>
            <person name="Maeda N."/>
            <person name="Oyama R."/>
            <person name="Ravasi T."/>
            <person name="Lenhard B."/>
            <person name="Wells C."/>
            <person name="Kodzius R."/>
            <person name="Shimokawa K."/>
            <person name="Bajic V.B."/>
            <person name="Brenner S.E."/>
            <person name="Batalov S."/>
            <person name="Forrest A.R."/>
            <person name="Zavolan M."/>
            <person name="Davis M.J."/>
            <person name="Wilming L.G."/>
            <person name="Aidinis V."/>
            <person name="Allen J.E."/>
            <person name="Ambesi-Impiombato A."/>
            <person name="Apweiler R."/>
            <person name="Aturaliya R.N."/>
            <person name="Bailey T.L."/>
            <person name="Bansal M."/>
            <person name="Baxter L."/>
            <person name="Beisel K.W."/>
            <person name="Bersano T."/>
            <person name="Bono H."/>
            <person name="Chalk A.M."/>
            <person name="Chiu K.P."/>
            <person name="Choudhary V."/>
            <person name="Christoffels A."/>
            <person name="Clutterbuck D.R."/>
            <person name="Crowe M.L."/>
            <person name="Dalla E."/>
            <person name="Dalrymple B.P."/>
            <person name="de Bono B."/>
            <person name="Della Gatta G."/>
            <person name="di Bernardo D."/>
            <person name="Down T."/>
            <person name="Engstrom P."/>
            <person name="Fagiolini M."/>
            <person name="Faulkner G."/>
            <person name="Fletcher C.F."/>
            <person name="Fukushima T."/>
            <person name="Furuno M."/>
            <person name="Futaki S."/>
            <person name="Gariboldi M."/>
            <person name="Georgii-Hemming P."/>
            <person name="Gingeras T.R."/>
            <person name="Gojobori T."/>
            <person name="Green R.E."/>
            <person name="Gustincich S."/>
            <person name="Harbers M."/>
            <person name="Hayashi Y."/>
            <person name="Hensch T.K."/>
            <person name="Hirokawa N."/>
            <person name="Hill D."/>
            <person name="Huminiecki L."/>
            <person name="Iacono M."/>
            <person name="Ikeo K."/>
            <person name="Iwama A."/>
            <person name="Ishikawa T."/>
            <person name="Jakt M."/>
            <person name="Kanapin A."/>
            <person name="Katoh M."/>
            <person name="Kawasawa Y."/>
            <person name="Kelso J."/>
            <person name="Kitamura H."/>
            <person name="Kitano H."/>
            <person name="Kollias G."/>
            <person name="Krishnan S.P."/>
            <person name="Kruger A."/>
            <person name="Kummerfeld S.K."/>
            <person name="Kurochkin I.V."/>
            <person name="Lareau L.F."/>
            <person name="Lazarevic D."/>
            <person name="Lipovich L."/>
            <person name="Liu J."/>
            <person name="Liuni S."/>
            <person name="McWilliam S."/>
            <person name="Madan Babu M."/>
            <person name="Madera M."/>
            <person name="Marchionni L."/>
            <person name="Matsuda H."/>
            <person name="Matsuzawa S."/>
            <person name="Miki H."/>
            <person name="Mignone F."/>
            <person name="Miyake S."/>
            <person name="Morris K."/>
            <person name="Mottagui-Tabar S."/>
            <person name="Mulder N."/>
            <person name="Nakano N."/>
            <person name="Nakauchi H."/>
            <person name="Ng P."/>
            <person name="Nilsson R."/>
            <person name="Nishiguchi S."/>
            <person name="Nishikawa S."/>
            <person name="Nori F."/>
            <person name="Ohara O."/>
            <person name="Okazaki Y."/>
            <person name="Orlando V."/>
            <person name="Pang K.C."/>
            <person name="Pavan W.J."/>
            <person name="Pavesi G."/>
            <person name="Pesole G."/>
            <person name="Petrovsky N."/>
            <person name="Piazza S."/>
            <person name="Reed J."/>
            <person name="Reid J.F."/>
            <person name="Ring B.Z."/>
            <person name="Ringwald M."/>
            <person name="Rost B."/>
            <person name="Ruan Y."/>
            <person name="Salzberg S.L."/>
            <person name="Sandelin A."/>
            <person name="Schneider C."/>
            <person name="Schoenbach C."/>
            <person name="Sekiguchi K."/>
            <person name="Semple C.A."/>
            <person name="Seno S."/>
            <person name="Sessa L."/>
            <person name="Sheng Y."/>
            <person name="Shibata Y."/>
            <person name="Shimada H."/>
            <person name="Shimada K."/>
            <person name="Silva D."/>
            <person name="Sinclair B."/>
            <person name="Sperling S."/>
            <person name="Stupka E."/>
            <person name="Sugiura K."/>
            <person name="Sultana R."/>
            <person name="Takenaka Y."/>
            <person name="Taki K."/>
            <person name="Tammoja K."/>
            <person name="Tan S.L."/>
            <person name="Tang S."/>
            <person name="Taylor M.S."/>
            <person name="Tegner J."/>
            <person name="Teichmann S.A."/>
            <person name="Ueda H.R."/>
            <person name="van Nimwegen E."/>
            <person name="Verardo R."/>
            <person name="Wei C.L."/>
            <person name="Yagi K."/>
            <person name="Yamanishi H."/>
            <person name="Zabarovsky E."/>
            <person name="Zhu S."/>
            <person name="Zimmer A."/>
            <person name="Hide W."/>
            <person name="Bult C."/>
            <person name="Grimmond S.M."/>
            <person name="Teasdale R.D."/>
            <person name="Liu E.T."/>
            <person name="Brusic V."/>
            <person name="Quackenbush J."/>
            <person name="Wahlestedt C."/>
            <person name="Mattick J.S."/>
            <person name="Hume D.A."/>
            <person name="Kai C."/>
            <person name="Sasaki D."/>
            <person name="Tomaru Y."/>
            <person name="Fukuda S."/>
            <person name="Kanamori-Katayama M."/>
            <person name="Suzuki M."/>
            <person name="Aoki J."/>
            <person name="Arakawa T."/>
            <person name="Iida J."/>
            <person name="Imamura K."/>
            <person name="Itoh M."/>
            <person name="Kato T."/>
            <person name="Kawaji H."/>
            <person name="Kawagashira N."/>
            <person name="Kawashima T."/>
            <person name="Kojima M."/>
            <person name="Kondo S."/>
            <person name="Konno H."/>
            <person name="Nakano K."/>
            <person name="Ninomiya N."/>
            <person name="Nishio T."/>
            <person name="Okada M."/>
            <person name="Plessy C."/>
            <person name="Shibata K."/>
            <person name="Shiraki T."/>
            <person name="Suzuki S."/>
            <person name="Tagami M."/>
            <person name="Waki K."/>
            <person name="Watahiki A."/>
            <person name="Okamura-Oho Y."/>
            <person name="Suzuki H."/>
            <person name="Kawai J."/>
            <person name="Hayashizaki Y."/>
        </authorList>
    </citation>
    <scope>NUCLEOTIDE SEQUENCE [LARGE SCALE MRNA]</scope>
    <source>
        <strain>C57BL/6J</strain>
        <tissue>Head</tissue>
    </source>
</reference>
<organism>
    <name type="scientific">Mus musculus</name>
    <name type="common">Mouse</name>
    <dbReference type="NCBI Taxonomy" id="10090"/>
    <lineage>
        <taxon>Eukaryota</taxon>
        <taxon>Metazoa</taxon>
        <taxon>Chordata</taxon>
        <taxon>Craniata</taxon>
        <taxon>Vertebrata</taxon>
        <taxon>Euteleostomi</taxon>
        <taxon>Mammalia</taxon>
        <taxon>Eutheria</taxon>
        <taxon>Euarchontoglires</taxon>
        <taxon>Glires</taxon>
        <taxon>Rodentia</taxon>
        <taxon>Myomorpha</taxon>
        <taxon>Muroidea</taxon>
        <taxon>Muridae</taxon>
        <taxon>Murinae</taxon>
        <taxon>Mus</taxon>
        <taxon>Mus</taxon>
    </lineage>
</organism>
<protein>
    <recommendedName>
        <fullName>Tigger transposable element-derived protein 4</fullName>
    </recommendedName>
</protein>
<gene>
    <name type="primary">Tigd4</name>
</gene>